<name>FTSZ_HALMT</name>
<comment type="function">
    <text evidence="1">Essential cell division protein that forms a contractile ring structure (Z ring) at the future cell division site. The regulation of the ring assembly controls the timing and the location of cell division. One of the functions of the FtsZ ring is to recruit other cell division proteins to the septum to produce a new cell wall between the dividing cells. Binds GTP and shows GTPase activity.</text>
</comment>
<comment type="subunit">
    <text evidence="1">Homodimer. Polymerizes to form a dynamic ring structure in a strictly GTP-dependent manner. Interacts directly with several other division proteins.</text>
</comment>
<comment type="subcellular location">
    <subcellularLocation>
        <location evidence="1">Cytoplasm</location>
    </subcellularLocation>
    <text evidence="1 3">Assembles at midcell at the inner surface of the cytoplasmic membrane.</text>
</comment>
<comment type="similarity">
    <text evidence="1">Belongs to the FtsZ family.</text>
</comment>
<comment type="sequence caution" evidence="4">
    <conflict type="erroneous initiation">
        <sequence resource="EMBL-CDS" id="AAF05837"/>
    </conflict>
    <text>Truncated N-terminus.</text>
</comment>
<feature type="chain" id="PRO_0000114398" description="Cell division protein FtsZ">
    <location>
        <begin position="1"/>
        <end position="377"/>
    </location>
</feature>
<feature type="region of interest" description="Disordered" evidence="2">
    <location>
        <begin position="1"/>
        <end position="33"/>
    </location>
</feature>
<feature type="compositionally biased region" description="Acidic residues" evidence="2">
    <location>
        <begin position="1"/>
        <end position="16"/>
    </location>
</feature>
<feature type="binding site" evidence="1">
    <location>
        <begin position="57"/>
        <end position="61"/>
    </location>
    <ligand>
        <name>GTP</name>
        <dbReference type="ChEBI" id="CHEBI:37565"/>
    </ligand>
</feature>
<feature type="binding site" evidence="1">
    <location>
        <begin position="144"/>
        <end position="146"/>
    </location>
    <ligand>
        <name>GTP</name>
        <dbReference type="ChEBI" id="CHEBI:37565"/>
    </ligand>
</feature>
<feature type="binding site" evidence="1">
    <location>
        <position position="175"/>
    </location>
    <ligand>
        <name>GTP</name>
        <dbReference type="ChEBI" id="CHEBI:37565"/>
    </ligand>
</feature>
<feature type="binding site" evidence="1">
    <location>
        <position position="179"/>
    </location>
    <ligand>
        <name>GTP</name>
        <dbReference type="ChEBI" id="CHEBI:37565"/>
    </ligand>
</feature>
<feature type="binding site" evidence="1">
    <location>
        <position position="222"/>
    </location>
    <ligand>
        <name>GTP</name>
        <dbReference type="ChEBI" id="CHEBI:37565"/>
    </ligand>
</feature>
<keyword id="KW-0131">Cell cycle</keyword>
<keyword id="KW-0132">Cell division</keyword>
<keyword id="KW-0963">Cytoplasm</keyword>
<keyword id="KW-0342">GTP-binding</keyword>
<keyword id="KW-0547">Nucleotide-binding</keyword>
<keyword id="KW-0717">Septation</keyword>
<reference key="1">
    <citation type="journal article" date="2000" name="Gene">
        <title>The ftsZ gene of Haloferax mediterranei: sequence, conserved gene order, and visualization of the FtsZ ring.</title>
        <authorList>
            <person name="Poplawski A."/>
            <person name="Gullbrand B."/>
            <person name="Bernander R."/>
        </authorList>
    </citation>
    <scope>NUCLEOTIDE SEQUENCE [GENOMIC DNA]</scope>
    <scope>SUBCELLULAR LOCATION</scope>
    <source>
        <strain>ATCC 33500 / DSM 1411 / JCM 8866 / NBRC 14739 / NCIMB 2177 / R-4</strain>
    </source>
</reference>
<reference key="2">
    <citation type="journal article" date="2012" name="J. Bacteriol.">
        <title>Complete genome sequence of the metabolically versatile halophilic archaeon Haloferax mediterranei, a poly(3-hydroxybutyrate-co-3-hydroxyvalerate) producer.</title>
        <authorList>
            <person name="Han J."/>
            <person name="Zhang F."/>
            <person name="Hou J."/>
            <person name="Liu X."/>
            <person name="Li M."/>
            <person name="Liu H."/>
            <person name="Cai L."/>
            <person name="Zhang B."/>
            <person name="Chen Y."/>
            <person name="Zhou J."/>
            <person name="Hu S."/>
            <person name="Xiang H."/>
        </authorList>
    </citation>
    <scope>NUCLEOTIDE SEQUENCE [LARGE SCALE GENOMIC DNA]</scope>
    <source>
        <strain>ATCC 33500 / DSM 1411 / JCM 8866 / NBRC 14739 / NCIMB 2177 / R-4</strain>
    </source>
</reference>
<evidence type="ECO:0000255" key="1">
    <source>
        <dbReference type="HAMAP-Rule" id="MF_00909"/>
    </source>
</evidence>
<evidence type="ECO:0000256" key="2">
    <source>
        <dbReference type="SAM" id="MobiDB-lite"/>
    </source>
</evidence>
<evidence type="ECO:0000269" key="3">
    <source>
    </source>
</evidence>
<evidence type="ECO:0000305" key="4"/>
<proteinExistence type="evidence at protein level"/>
<accession>Q9V2S6</accession>
<accession>I3R2D9</accession>
<protein>
    <recommendedName>
        <fullName evidence="1">Cell division protein FtsZ</fullName>
    </recommendedName>
</protein>
<organism>
    <name type="scientific">Haloferax mediterranei (strain ATCC 33500 / DSM 1411 / JCM 8866 / NBRC 14739 / NCIMB 2177 / R-4)</name>
    <name type="common">Halobacterium mediterranei</name>
    <dbReference type="NCBI Taxonomy" id="523841"/>
    <lineage>
        <taxon>Archaea</taxon>
        <taxon>Methanobacteriati</taxon>
        <taxon>Methanobacteriota</taxon>
        <taxon>Stenosarchaea group</taxon>
        <taxon>Halobacteria</taxon>
        <taxon>Halobacteriales</taxon>
        <taxon>Haloferacaceae</taxon>
        <taxon>Haloferax</taxon>
    </lineage>
</organism>
<sequence length="377" mass="39538">MDSIVDDAIDEAEDMGDGSAEVGGPTDINRSGTMTDDELQAVLKDLQTNITVVGCGGAGGNTVNRMHEEGIKGAKLVAANTDVQHLVEIGADTKILMGEQKTQGRGAGSLPQVGEEAALESQEEIYDAIEGSDMVFVTAGLGGGTGTGSAPVVAKAARESGALTIAIVTTPFTAEGEVRRTNAEAGLERLRDVSDTVIVVPNDRLLDAVGKLPVRQAFKVSDEVLMRSVKGITELITKPGLVNLDFADVKTVMERGGVAMIGLGESDSESKAQESVKSALRSPLLDVDISGANSALVNVTGGSDMSIEEAEGVVEEIYDRIDPDARIIWGTSVDDELEGMMRTMIVVTGVESPQIYGRNGEVQAQAEGRLEDIDYVE</sequence>
<gene>
    <name evidence="1" type="primary">ftsZ</name>
    <name type="ordered locus">HFX_0676</name>
</gene>
<dbReference type="EMBL" id="AF196833">
    <property type="protein sequence ID" value="AAF05837.1"/>
    <property type="status" value="ALT_INIT"/>
    <property type="molecule type" value="Genomic_DNA"/>
</dbReference>
<dbReference type="EMBL" id="CP001868">
    <property type="protein sequence ID" value="AFK18399.1"/>
    <property type="molecule type" value="Genomic_DNA"/>
</dbReference>
<dbReference type="PIR" id="T44631">
    <property type="entry name" value="T44631"/>
</dbReference>
<dbReference type="RefSeq" id="WP_004057551.1">
    <property type="nucleotide sequence ID" value="NC_017941.2"/>
</dbReference>
<dbReference type="SMR" id="Q9V2S6"/>
<dbReference type="STRING" id="523841.HFX_0676"/>
<dbReference type="PaxDb" id="523841-HFX_0676"/>
<dbReference type="GeneID" id="40156036"/>
<dbReference type="KEGG" id="hme:HFX_0676"/>
<dbReference type="eggNOG" id="arCOG02201">
    <property type="taxonomic scope" value="Archaea"/>
</dbReference>
<dbReference type="HOGENOM" id="CLU_024865_0_1_2"/>
<dbReference type="OrthoDB" id="371908at2157"/>
<dbReference type="Proteomes" id="UP000006469">
    <property type="component" value="Chromosome"/>
</dbReference>
<dbReference type="GO" id="GO:0032153">
    <property type="term" value="C:cell division site"/>
    <property type="evidence" value="ECO:0007669"/>
    <property type="project" value="UniProtKB-UniRule"/>
</dbReference>
<dbReference type="GO" id="GO:0005737">
    <property type="term" value="C:cytoplasm"/>
    <property type="evidence" value="ECO:0007669"/>
    <property type="project" value="UniProtKB-SubCell"/>
</dbReference>
<dbReference type="GO" id="GO:0005525">
    <property type="term" value="F:GTP binding"/>
    <property type="evidence" value="ECO:0007669"/>
    <property type="project" value="UniProtKB-UniRule"/>
</dbReference>
<dbReference type="GO" id="GO:0003924">
    <property type="term" value="F:GTPase activity"/>
    <property type="evidence" value="ECO:0007669"/>
    <property type="project" value="UniProtKB-UniRule"/>
</dbReference>
<dbReference type="GO" id="GO:0043093">
    <property type="term" value="P:FtsZ-dependent cytokinesis"/>
    <property type="evidence" value="ECO:0007669"/>
    <property type="project" value="UniProtKB-UniRule"/>
</dbReference>
<dbReference type="GO" id="GO:0051258">
    <property type="term" value="P:protein polymerization"/>
    <property type="evidence" value="ECO:0007669"/>
    <property type="project" value="UniProtKB-UniRule"/>
</dbReference>
<dbReference type="CDD" id="cd02201">
    <property type="entry name" value="FtsZ_type1"/>
    <property type="match status" value="1"/>
</dbReference>
<dbReference type="FunFam" id="3.40.50.1440:FF:000023">
    <property type="entry name" value="Cell division protein FtsZ"/>
    <property type="match status" value="1"/>
</dbReference>
<dbReference type="Gene3D" id="3.40.50.1440">
    <property type="entry name" value="Tubulin/FtsZ, GTPase domain"/>
    <property type="match status" value="1"/>
</dbReference>
<dbReference type="HAMAP" id="MF_00909">
    <property type="entry name" value="FtsZ"/>
    <property type="match status" value="1"/>
</dbReference>
<dbReference type="InterPro" id="IPR000158">
    <property type="entry name" value="Cell_div_FtsZ"/>
</dbReference>
<dbReference type="InterPro" id="IPR020805">
    <property type="entry name" value="Cell_div_FtsZ_CS"/>
</dbReference>
<dbReference type="InterPro" id="IPR018247">
    <property type="entry name" value="EF_Hand_1_Ca_BS"/>
</dbReference>
<dbReference type="InterPro" id="IPR045061">
    <property type="entry name" value="FtsZ/CetZ"/>
</dbReference>
<dbReference type="InterPro" id="IPR024757">
    <property type="entry name" value="FtsZ_C"/>
</dbReference>
<dbReference type="InterPro" id="IPR008280">
    <property type="entry name" value="Tub_FtsZ_C"/>
</dbReference>
<dbReference type="InterPro" id="IPR018316">
    <property type="entry name" value="Tubulin/FtsZ_2-layer-sand-dom"/>
</dbReference>
<dbReference type="InterPro" id="IPR036525">
    <property type="entry name" value="Tubulin/FtsZ_GTPase_sf"/>
</dbReference>
<dbReference type="InterPro" id="IPR003008">
    <property type="entry name" value="Tubulin_FtsZ_GTPase"/>
</dbReference>
<dbReference type="NCBIfam" id="TIGR00065">
    <property type="entry name" value="ftsZ"/>
    <property type="match status" value="1"/>
</dbReference>
<dbReference type="PANTHER" id="PTHR30314">
    <property type="entry name" value="CELL DIVISION PROTEIN FTSZ-RELATED"/>
    <property type="match status" value="1"/>
</dbReference>
<dbReference type="PANTHER" id="PTHR30314:SF3">
    <property type="entry name" value="MITOCHONDRIAL DIVISION PROTEIN FSZA"/>
    <property type="match status" value="1"/>
</dbReference>
<dbReference type="Pfam" id="PF12327">
    <property type="entry name" value="FtsZ_C"/>
    <property type="match status" value="1"/>
</dbReference>
<dbReference type="Pfam" id="PF00091">
    <property type="entry name" value="Tubulin"/>
    <property type="match status" value="1"/>
</dbReference>
<dbReference type="PRINTS" id="PR00423">
    <property type="entry name" value="CELLDVISFTSZ"/>
</dbReference>
<dbReference type="SMART" id="SM00864">
    <property type="entry name" value="Tubulin"/>
    <property type="match status" value="1"/>
</dbReference>
<dbReference type="SMART" id="SM00865">
    <property type="entry name" value="Tubulin_C"/>
    <property type="match status" value="1"/>
</dbReference>
<dbReference type="SUPFAM" id="SSF55307">
    <property type="entry name" value="Tubulin C-terminal domain-like"/>
    <property type="match status" value="1"/>
</dbReference>
<dbReference type="SUPFAM" id="SSF52490">
    <property type="entry name" value="Tubulin nucleotide-binding domain-like"/>
    <property type="match status" value="1"/>
</dbReference>
<dbReference type="PROSITE" id="PS01134">
    <property type="entry name" value="FTSZ_1"/>
    <property type="match status" value="1"/>
</dbReference>
<dbReference type="PROSITE" id="PS01135">
    <property type="entry name" value="FTSZ_2"/>
    <property type="match status" value="1"/>
</dbReference>